<organism>
    <name type="scientific">Homo sapiens</name>
    <name type="common">Human</name>
    <dbReference type="NCBI Taxonomy" id="9606"/>
    <lineage>
        <taxon>Eukaryota</taxon>
        <taxon>Metazoa</taxon>
        <taxon>Chordata</taxon>
        <taxon>Craniata</taxon>
        <taxon>Vertebrata</taxon>
        <taxon>Euteleostomi</taxon>
        <taxon>Mammalia</taxon>
        <taxon>Eutheria</taxon>
        <taxon>Euarchontoglires</taxon>
        <taxon>Primates</taxon>
        <taxon>Haplorrhini</taxon>
        <taxon>Catarrhini</taxon>
        <taxon>Hominidae</taxon>
        <taxon>Homo</taxon>
    </lineage>
</organism>
<keyword id="KW-0002">3D-structure</keyword>
<keyword id="KW-0025">Alternative splicing</keyword>
<keyword id="KW-0075">B-cell activation</keyword>
<keyword id="KW-1003">Cell membrane</keyword>
<keyword id="KW-1015">Disulfide bond</keyword>
<keyword id="KW-0449">Lipoprotein</keyword>
<keyword id="KW-0472">Membrane</keyword>
<keyword id="KW-0564">Palmitate</keyword>
<keyword id="KW-0582">Pharmaceutical</keyword>
<keyword id="KW-0597">Phosphoprotein</keyword>
<keyword id="KW-1267">Proteomics identification</keyword>
<keyword id="KW-1185">Reference proteome</keyword>
<keyword id="KW-0812">Transmembrane</keyword>
<keyword id="KW-1133">Transmembrane helix</keyword>
<evidence type="ECO:0000250" key="1">
    <source>
        <dbReference type="UniProtKB" id="P19437"/>
    </source>
</evidence>
<evidence type="ECO:0000255" key="2"/>
<evidence type="ECO:0000256" key="3">
    <source>
        <dbReference type="SAM" id="MobiDB-lite"/>
    </source>
</evidence>
<evidence type="ECO:0000269" key="4">
    <source>
    </source>
</evidence>
<evidence type="ECO:0000269" key="5">
    <source>
    </source>
</evidence>
<evidence type="ECO:0000269" key="6">
    <source>
    </source>
</evidence>
<evidence type="ECO:0000269" key="7">
    <source>
    </source>
</evidence>
<evidence type="ECO:0000269" key="8">
    <source>
    </source>
</evidence>
<evidence type="ECO:0000269" key="9">
    <source>
    </source>
</evidence>
<evidence type="ECO:0000269" key="10">
    <source>
    </source>
</evidence>
<evidence type="ECO:0000269" key="11">
    <source>
    </source>
</evidence>
<evidence type="ECO:0000269" key="12">
    <source>
    </source>
</evidence>
<evidence type="ECO:0000269" key="13">
    <source>
    </source>
</evidence>
<evidence type="ECO:0000269" key="14">
    <source>
    </source>
</evidence>
<evidence type="ECO:0000303" key="15">
    <source>
    </source>
</evidence>
<evidence type="ECO:0000305" key="16"/>
<evidence type="ECO:0000305" key="17">
    <source>
    </source>
</evidence>
<evidence type="ECO:0007829" key="18">
    <source>
        <dbReference type="PDB" id="3PP4"/>
    </source>
</evidence>
<evidence type="ECO:0007829" key="19">
    <source>
        <dbReference type="PDB" id="6VJA"/>
    </source>
</evidence>
<evidence type="ECO:0007829" key="20">
    <source>
        <dbReference type="PDB" id="8VGN"/>
    </source>
</evidence>
<gene>
    <name type="primary">MS4A1</name>
    <name type="synonym">CD20</name>
</gene>
<reference key="1">
    <citation type="journal article" date="1988" name="J. Exp. Med.">
        <title>Analysis of two cDNA clones encoding the B lymphocyte antigen CD20 (B1, Bp35), a type III integral membrane protein.</title>
        <authorList>
            <person name="Stamenkovic I."/>
            <person name="Seed B."/>
        </authorList>
    </citation>
    <scope>NUCLEOTIDE SEQUENCE [MRNA] (ISOFORM 1)</scope>
</reference>
<reference key="2">
    <citation type="journal article" date="1988" name="Proc. Natl. Acad. Sci. U.S.A.">
        <title>Isolation and structure of a cDNA encoding the B1 (CD20) cell-surface antigen of human B lymphocytes.</title>
        <authorList>
            <person name="Tedder T.F."/>
            <person name="Streuli M."/>
            <person name="Schlossman S.F."/>
            <person name="Saito H."/>
        </authorList>
    </citation>
    <scope>NUCLEOTIDE SEQUENCE [MRNA] (ISOFORM 1)</scope>
</reference>
<reference key="3">
    <citation type="journal article" date="1988" name="EMBO J.">
        <title>Molecular cloning of the human B cell CD20 receptor predicts a hydrophobic protein with multiple transmembrane domains.</title>
        <authorList>
            <person name="Einfeld D.A."/>
            <person name="Brown J.P."/>
            <person name="Valentine M.A."/>
            <person name="Clark E.A."/>
            <person name="Ledbetter J.A."/>
        </authorList>
    </citation>
    <scope>NUCLEOTIDE SEQUENCE [MRNA] (ISOFORM 1)</scope>
</reference>
<reference key="4">
    <citation type="journal article" date="1989" name="J. Immunol.">
        <title>Structure of the gene encoding the human B lymphocyte differentiation antigen CD20 (B1).</title>
        <authorList>
            <person name="Tedder T.F."/>
            <person name="Klejman G."/>
            <person name="Schlossman S.F."/>
            <person name="Saito H."/>
        </authorList>
    </citation>
    <scope>NUCLEOTIDE SEQUENCE [GENOMIC DNA]</scope>
</reference>
<reference key="5">
    <citation type="journal article" date="2004" name="Nat. Genet.">
        <title>Complete sequencing and characterization of 21,243 full-length human cDNAs.</title>
        <authorList>
            <person name="Ota T."/>
            <person name="Suzuki Y."/>
            <person name="Nishikawa T."/>
            <person name="Otsuki T."/>
            <person name="Sugiyama T."/>
            <person name="Irie R."/>
            <person name="Wakamatsu A."/>
            <person name="Hayashi K."/>
            <person name="Sato H."/>
            <person name="Nagai K."/>
            <person name="Kimura K."/>
            <person name="Makita H."/>
            <person name="Sekine M."/>
            <person name="Obayashi M."/>
            <person name="Nishi T."/>
            <person name="Shibahara T."/>
            <person name="Tanaka T."/>
            <person name="Ishii S."/>
            <person name="Yamamoto J."/>
            <person name="Saito K."/>
            <person name="Kawai Y."/>
            <person name="Isono Y."/>
            <person name="Nakamura Y."/>
            <person name="Nagahari K."/>
            <person name="Murakami K."/>
            <person name="Yasuda T."/>
            <person name="Iwayanagi T."/>
            <person name="Wagatsuma M."/>
            <person name="Shiratori A."/>
            <person name="Sudo H."/>
            <person name="Hosoiri T."/>
            <person name="Kaku Y."/>
            <person name="Kodaira H."/>
            <person name="Kondo H."/>
            <person name="Sugawara M."/>
            <person name="Takahashi M."/>
            <person name="Kanda K."/>
            <person name="Yokoi T."/>
            <person name="Furuya T."/>
            <person name="Kikkawa E."/>
            <person name="Omura Y."/>
            <person name="Abe K."/>
            <person name="Kamihara K."/>
            <person name="Katsuta N."/>
            <person name="Sato K."/>
            <person name="Tanikawa M."/>
            <person name="Yamazaki M."/>
            <person name="Ninomiya K."/>
            <person name="Ishibashi T."/>
            <person name="Yamashita H."/>
            <person name="Murakawa K."/>
            <person name="Fujimori K."/>
            <person name="Tanai H."/>
            <person name="Kimata M."/>
            <person name="Watanabe M."/>
            <person name="Hiraoka S."/>
            <person name="Chiba Y."/>
            <person name="Ishida S."/>
            <person name="Ono Y."/>
            <person name="Takiguchi S."/>
            <person name="Watanabe S."/>
            <person name="Yosida M."/>
            <person name="Hotuta T."/>
            <person name="Kusano J."/>
            <person name="Kanehori K."/>
            <person name="Takahashi-Fujii A."/>
            <person name="Hara H."/>
            <person name="Tanase T.-O."/>
            <person name="Nomura Y."/>
            <person name="Togiya S."/>
            <person name="Komai F."/>
            <person name="Hara R."/>
            <person name="Takeuchi K."/>
            <person name="Arita M."/>
            <person name="Imose N."/>
            <person name="Musashino K."/>
            <person name="Yuuki H."/>
            <person name="Oshima A."/>
            <person name="Sasaki N."/>
            <person name="Aotsuka S."/>
            <person name="Yoshikawa Y."/>
            <person name="Matsunawa H."/>
            <person name="Ichihara T."/>
            <person name="Shiohata N."/>
            <person name="Sano S."/>
            <person name="Moriya S."/>
            <person name="Momiyama H."/>
            <person name="Satoh N."/>
            <person name="Takami S."/>
            <person name="Terashima Y."/>
            <person name="Suzuki O."/>
            <person name="Nakagawa S."/>
            <person name="Senoh A."/>
            <person name="Mizoguchi H."/>
            <person name="Goto Y."/>
            <person name="Shimizu F."/>
            <person name="Wakebe H."/>
            <person name="Hishigaki H."/>
            <person name="Watanabe T."/>
            <person name="Sugiyama A."/>
            <person name="Takemoto M."/>
            <person name="Kawakami B."/>
            <person name="Yamazaki M."/>
            <person name="Watanabe K."/>
            <person name="Kumagai A."/>
            <person name="Itakura S."/>
            <person name="Fukuzumi Y."/>
            <person name="Fujimori Y."/>
            <person name="Komiyama M."/>
            <person name="Tashiro H."/>
            <person name="Tanigami A."/>
            <person name="Fujiwara T."/>
            <person name="Ono T."/>
            <person name="Yamada K."/>
            <person name="Fujii Y."/>
            <person name="Ozaki K."/>
            <person name="Hirao M."/>
            <person name="Ohmori Y."/>
            <person name="Kawabata A."/>
            <person name="Hikiji T."/>
            <person name="Kobatake N."/>
            <person name="Inagaki H."/>
            <person name="Ikema Y."/>
            <person name="Okamoto S."/>
            <person name="Okitani R."/>
            <person name="Kawakami T."/>
            <person name="Noguchi S."/>
            <person name="Itoh T."/>
            <person name="Shigeta K."/>
            <person name="Senba T."/>
            <person name="Matsumura K."/>
            <person name="Nakajima Y."/>
            <person name="Mizuno T."/>
            <person name="Morinaga M."/>
            <person name="Sasaki M."/>
            <person name="Togashi T."/>
            <person name="Oyama M."/>
            <person name="Hata H."/>
            <person name="Watanabe M."/>
            <person name="Komatsu T."/>
            <person name="Mizushima-Sugano J."/>
            <person name="Satoh T."/>
            <person name="Shirai Y."/>
            <person name="Takahashi Y."/>
            <person name="Nakagawa K."/>
            <person name="Okumura K."/>
            <person name="Nagase T."/>
            <person name="Nomura N."/>
            <person name="Kikuchi H."/>
            <person name="Masuho Y."/>
            <person name="Yamashita R."/>
            <person name="Nakai K."/>
            <person name="Yada T."/>
            <person name="Nakamura Y."/>
            <person name="Ohara O."/>
            <person name="Isogai T."/>
            <person name="Sugano S."/>
        </authorList>
    </citation>
    <scope>NUCLEOTIDE SEQUENCE [LARGE SCALE MRNA] (ISOFORM 2)</scope>
</reference>
<reference key="6">
    <citation type="journal article" date="2006" name="Nature">
        <title>Human chromosome 11 DNA sequence and analysis including novel gene identification.</title>
        <authorList>
            <person name="Taylor T.D."/>
            <person name="Noguchi H."/>
            <person name="Totoki Y."/>
            <person name="Toyoda A."/>
            <person name="Kuroki Y."/>
            <person name="Dewar K."/>
            <person name="Lloyd C."/>
            <person name="Itoh T."/>
            <person name="Takeda T."/>
            <person name="Kim D.-W."/>
            <person name="She X."/>
            <person name="Barlow K.F."/>
            <person name="Bloom T."/>
            <person name="Bruford E."/>
            <person name="Chang J.L."/>
            <person name="Cuomo C.A."/>
            <person name="Eichler E."/>
            <person name="FitzGerald M.G."/>
            <person name="Jaffe D.B."/>
            <person name="LaButti K."/>
            <person name="Nicol R."/>
            <person name="Park H.-S."/>
            <person name="Seaman C."/>
            <person name="Sougnez C."/>
            <person name="Yang X."/>
            <person name="Zimmer A.R."/>
            <person name="Zody M.C."/>
            <person name="Birren B.W."/>
            <person name="Nusbaum C."/>
            <person name="Fujiyama A."/>
            <person name="Hattori M."/>
            <person name="Rogers J."/>
            <person name="Lander E.S."/>
            <person name="Sakaki Y."/>
        </authorList>
    </citation>
    <scope>NUCLEOTIDE SEQUENCE [LARGE SCALE GENOMIC DNA]</scope>
</reference>
<reference key="7">
    <citation type="submission" date="2005-07" db="EMBL/GenBank/DDBJ databases">
        <authorList>
            <person name="Mural R.J."/>
            <person name="Istrail S."/>
            <person name="Sutton G.G."/>
            <person name="Florea L."/>
            <person name="Halpern A.L."/>
            <person name="Mobarry C.M."/>
            <person name="Lippert R."/>
            <person name="Walenz B."/>
            <person name="Shatkay H."/>
            <person name="Dew I."/>
            <person name="Miller J.R."/>
            <person name="Flanigan M.J."/>
            <person name="Edwards N.J."/>
            <person name="Bolanos R."/>
            <person name="Fasulo D."/>
            <person name="Halldorsson B.V."/>
            <person name="Hannenhalli S."/>
            <person name="Turner R."/>
            <person name="Yooseph S."/>
            <person name="Lu F."/>
            <person name="Nusskern D.R."/>
            <person name="Shue B.C."/>
            <person name="Zheng X.H."/>
            <person name="Zhong F."/>
            <person name="Delcher A.L."/>
            <person name="Huson D.H."/>
            <person name="Kravitz S.A."/>
            <person name="Mouchard L."/>
            <person name="Reinert K."/>
            <person name="Remington K.A."/>
            <person name="Clark A.G."/>
            <person name="Waterman M.S."/>
            <person name="Eichler E.E."/>
            <person name="Adams M.D."/>
            <person name="Hunkapiller M.W."/>
            <person name="Myers E.W."/>
            <person name="Venter J.C."/>
        </authorList>
    </citation>
    <scope>NUCLEOTIDE SEQUENCE [LARGE SCALE GENOMIC DNA]</scope>
</reference>
<reference key="8">
    <citation type="journal article" date="2004" name="Genome Res.">
        <title>The status, quality, and expansion of the NIH full-length cDNA project: the Mammalian Gene Collection (MGC).</title>
        <authorList>
            <consortium name="The MGC Project Team"/>
        </authorList>
    </citation>
    <scope>NUCLEOTIDE SEQUENCE [LARGE SCALE MRNA] (ISOFORM 1)</scope>
    <source>
        <tissue>Lymph</tissue>
    </source>
</reference>
<reference key="9">
    <citation type="journal article" date="1985" name="J. Immunol.">
        <title>The B cell surface molecule B1 is functionally linked with B cell activation and differentiation.</title>
        <authorList>
            <person name="Tedder T.F."/>
            <person name="Boyd A.W."/>
            <person name="Freedman A.S."/>
            <person name="Nadler L.M."/>
            <person name="Schlossman S.F."/>
        </authorList>
    </citation>
    <scope>FUNCTION</scope>
</reference>
<reference key="10">
    <citation type="journal article" date="1989" name="J. Biol. Chem.">
        <title>Phosphorylation of the CD20 phosphoprotein in resting B lymphocytes. Regulation by protein kinase C.</title>
        <authorList>
            <person name="Valentine M.A."/>
            <person name="Meier K.E."/>
            <person name="Rossie S."/>
            <person name="Clark E.A."/>
        </authorList>
    </citation>
    <scope>PHOSPHORYLATION BY PKC</scope>
</reference>
<reference key="11">
    <citation type="journal article" date="1993" name="J. Cell Biol.">
        <title>Transfection of the CD20 cell surface molecule into ectopic cell types generates a Ca2+ conductance found constitutively in B lymphocytes.</title>
        <authorList>
            <person name="Bubien J.K."/>
            <person name="Zhou L.J."/>
            <person name="Bell P.D."/>
            <person name="Frizzell R.A."/>
            <person name="Tedder T.F."/>
        </authorList>
    </citation>
    <scope>FUNCTION</scope>
    <scope>SUBUNIT</scope>
    <scope>PHOSPHORYLATION</scope>
</reference>
<reference key="12">
    <citation type="journal article" date="2003" name="J. Biol. Chem.">
        <title>Store-operated cation entry mediated by CD20 in membrane rafts.</title>
        <authorList>
            <person name="Li H."/>
            <person name="Ayer L.M."/>
            <person name="Lytton J."/>
            <person name="Deans J.P."/>
        </authorList>
    </citation>
    <scope>FUNCTION</scope>
    <scope>SUBCELLULAR LOCATION</scope>
</reference>
<reference key="13">
    <citation type="journal article" date="2006" name="J. Immunol.">
        <title>The biological activity of human CD20 monoclonal antibodies is linked to unique epitopes on CD20.</title>
        <authorList>
            <person name="Teeling J.L."/>
            <person name="Mackus W.J.M."/>
            <person name="Wiegman L.J.J.M."/>
            <person name="van den Brakel J.H.N."/>
            <person name="Beers S.A."/>
            <person name="French R.R."/>
            <person name="van Meerten T."/>
            <person name="Ebeling S."/>
            <person name="Vink T."/>
            <person name="Slootstra J.W."/>
            <person name="Parren P.W.H.I."/>
            <person name="Glennie M.J."/>
            <person name="van de Winkel J.G.J."/>
        </authorList>
    </citation>
    <scope>EPITOPE MAPPING</scope>
    <scope>MUTAGENESIS OF THR-159; ASN-163; ASN-166; ALA-170 AND PRO-172</scope>
</reference>
<reference key="14">
    <citation type="journal article" date="2008" name="J. Proteome Res.">
        <title>Phosphorylation analysis of primary human T lymphocytes using sequential IMAC and titanium oxide enrichment.</title>
        <authorList>
            <person name="Carrascal M."/>
            <person name="Ovelleiro D."/>
            <person name="Casas V."/>
            <person name="Gay M."/>
            <person name="Abian J."/>
        </authorList>
    </citation>
    <scope>IDENTIFICATION BY MASS SPECTROMETRY [LARGE SCALE ANALYSIS]</scope>
    <source>
        <tissue>T-cell</tissue>
    </source>
</reference>
<reference key="15">
    <citation type="journal article" date="2008" name="J. Biol. Chem.">
        <title>CD20 homo-oligomers physically associate with the B cell antigen receptor. Dissociation upon receptor engagement and recruitment of phosphoproteins and calmodulin-binding proteins.</title>
        <authorList>
            <person name="Polyak M.J."/>
            <person name="Li H."/>
            <person name="Shariat N."/>
            <person name="Deans J.P."/>
        </authorList>
    </citation>
    <scope>FUNCTION</scope>
    <scope>SUBUNIT</scope>
    <scope>IMMUNOGLOBULIN-BINDING</scope>
</reference>
<reference key="16">
    <citation type="journal article" date="2010" name="J. Clin. Invest.">
        <title>CD20 deficiency in humans results in impaired T cell-independent antibody responses.</title>
        <authorList>
            <person name="Kuijpers T.W."/>
            <person name="Bende R.J."/>
            <person name="Baars P.A."/>
            <person name="Grummels A."/>
            <person name="Derks I.A.M."/>
            <person name="Dolman K.M."/>
            <person name="Beaumont T."/>
            <person name="Tedder T.F."/>
            <person name="van Noesel C.J.M."/>
            <person name="Eldering E."/>
            <person name="van Lier R.A.W."/>
        </authorList>
    </citation>
    <scope>INVOLVEMENT IN CVID5</scope>
</reference>
<reference key="17">
    <citation type="journal article" date="2012" name="PLoS ONE">
        <title>Proteomic analysis of S-acylated proteins in human B cells reveals palmitoylation of the immune regulators CD20 and CD23.</title>
        <authorList>
            <person name="Ivaldi C."/>
            <person name="Martin B.R."/>
            <person name="Kieffer-Jaquinod S."/>
            <person name="Chapel A."/>
            <person name="Levade T."/>
            <person name="Garin J."/>
            <person name="Journet A."/>
        </authorList>
    </citation>
    <scope>PALMITOYLATION AT CYS-111 AND CYS-220</scope>
    <scope>TOPOLOGY</scope>
    <scope>SUBCELLULAR LOCATION</scope>
    <source>
        <tissue>B-cell</tissue>
    </source>
</reference>
<reference key="18">
    <citation type="journal article" date="2007" name="J. Biol. Chem.">
        <title>Structural basis for recognition of CD20 by therapeutic antibody Rituximab.</title>
        <authorList>
            <person name="Du J."/>
            <person name="Wang H."/>
            <person name="Zhong C."/>
            <person name="Peng B."/>
            <person name="Zhang M."/>
            <person name="Li B."/>
            <person name="Huo S."/>
            <person name="Guo Y."/>
            <person name="Ding J."/>
        </authorList>
    </citation>
    <scope>X-RAY CRYSTALLOGRAPHY (2.60 ANGSTROMS) OF 163-187</scope>
    <scope>DISULFIDE BOND</scope>
</reference>
<reference key="19">
    <citation type="journal article" date="2008" name="Mol. Immunol.">
        <title>Crystal structure of chimeric antibody C2H7 Fab in complex with a CD20 peptide.</title>
        <authorList>
            <person name="Du J."/>
            <person name="Wang H."/>
            <person name="Zhong C."/>
            <person name="Peng B."/>
            <person name="Zhang M."/>
            <person name="Li B."/>
            <person name="Hou S."/>
            <person name="Guo Y."/>
            <person name="Ding J."/>
        </authorList>
    </citation>
    <scope>X-RAY CRYSTALLOGRAPHY (2.61 ANGSTROMS) OF 163-187</scope>
    <scope>DISULFIDE BOND</scope>
</reference>
<reference key="20">
    <citation type="journal article" date="2011" name="Blood">
        <title>Epitope characterization and crystal structure of GA101 provide insights into the molecular basis for type I/II distinction of CD20 antibodies.</title>
        <authorList>
            <person name="Niederfellner G."/>
            <person name="Lammens A."/>
            <person name="Mundigl O."/>
            <person name="Georges G.J."/>
            <person name="Schaefer W."/>
            <person name="Schwaiger M."/>
            <person name="Franke A."/>
            <person name="Wiechmann K."/>
            <person name="Jenewein S."/>
            <person name="Slootstra J.W."/>
            <person name="Timmerman P."/>
            <person name="Brannstrom A."/>
            <person name="Lindstrom F."/>
            <person name="Mossner E."/>
            <person name="Umana P."/>
            <person name="Hopfner K.P."/>
            <person name="Klein C."/>
        </authorList>
    </citation>
    <scope>X-RAY CRYSTALLOGRAPHY (1.6 ANGSTROMS) OF 163-187 IN COMPLEX WITH ANTIBODY</scope>
    <scope>DISULFIDE BOND</scope>
</reference>
<protein>
    <recommendedName>
        <fullName>B-lymphocyte antigen CD20</fullName>
    </recommendedName>
    <alternativeName>
        <fullName>B-lymphocyte surface antigen B1</fullName>
    </alternativeName>
    <alternativeName>
        <fullName>Bp35</fullName>
    </alternativeName>
    <alternativeName>
        <fullName>Leukocyte surface antigen Leu-16</fullName>
    </alternativeName>
    <alternativeName>
        <fullName>Membrane-spanning 4-domains subfamily A member 1</fullName>
    </alternativeName>
    <cdAntigenName>CD20</cdAntigenName>
</protein>
<feature type="chain" id="PRO_0000158627" description="B-lymphocyte antigen CD20">
    <location>
        <begin position="1"/>
        <end position="297"/>
    </location>
</feature>
<feature type="topological domain" description="Cytoplasmic" evidence="2">
    <location>
        <begin position="1"/>
        <end position="56"/>
    </location>
</feature>
<feature type="transmembrane region" description="Helical" evidence="2">
    <location>
        <begin position="57"/>
        <end position="78"/>
    </location>
</feature>
<feature type="topological domain" description="Extracellular" evidence="2">
    <location>
        <begin position="79"/>
        <end position="84"/>
    </location>
</feature>
<feature type="transmembrane region" description="Helical" evidence="2">
    <location>
        <begin position="85"/>
        <end position="105"/>
    </location>
</feature>
<feature type="topological domain" description="Cytoplasmic" evidence="2">
    <location>
        <begin position="106"/>
        <end position="120"/>
    </location>
</feature>
<feature type="transmembrane region" description="Helical" evidence="2">
    <location>
        <begin position="121"/>
        <end position="141"/>
    </location>
</feature>
<feature type="topological domain" description="Extracellular" evidence="2">
    <location>
        <begin position="142"/>
        <end position="188"/>
    </location>
</feature>
<feature type="transmembrane region" description="Helical" evidence="2">
    <location>
        <begin position="189"/>
        <end position="209"/>
    </location>
</feature>
<feature type="topological domain" description="Cytoplasmic" evidence="2">
    <location>
        <begin position="210"/>
        <end position="297"/>
    </location>
</feature>
<feature type="region of interest" description="Epitope 1">
    <location>
        <begin position="74"/>
        <end position="80"/>
    </location>
</feature>
<feature type="region of interest" description="Epitope 2">
    <location>
        <begin position="146"/>
        <end position="160"/>
    </location>
</feature>
<feature type="region of interest" description="Epitope 3 (recognized by antibodies, including Rituximab)">
    <location>
        <begin position="168"/>
        <end position="175"/>
    </location>
</feature>
<feature type="region of interest" description="Disordered" evidence="3">
    <location>
        <begin position="247"/>
        <end position="297"/>
    </location>
</feature>
<feature type="compositionally biased region" description="Acidic residues" evidence="3">
    <location>
        <begin position="260"/>
        <end position="276"/>
    </location>
</feature>
<feature type="compositionally biased region" description="Polar residues" evidence="3">
    <location>
        <begin position="285"/>
        <end position="297"/>
    </location>
</feature>
<feature type="modified residue" description="Phosphoserine" evidence="1">
    <location>
        <position position="36"/>
    </location>
</feature>
<feature type="modified residue" description="Phosphoserine" evidence="1">
    <location>
        <position position="225"/>
    </location>
</feature>
<feature type="modified residue" description="Phosphothreonine" evidence="1">
    <location>
        <position position="239"/>
    </location>
</feature>
<feature type="lipid moiety-binding region" description="S-palmitoyl cysteine" evidence="17">
    <location>
        <position position="111"/>
    </location>
</feature>
<feature type="lipid moiety-binding region" description="S-palmitoyl cysteine" evidence="11">
    <location>
        <position position="220"/>
    </location>
</feature>
<feature type="disulfide bond" evidence="6 7 10">
    <location>
        <begin position="167"/>
        <end position="183"/>
    </location>
</feature>
<feature type="splice variant" id="VSP_057058" description="In isoform 2." evidence="15">
    <location>
        <begin position="38"/>
        <end position="204"/>
    </location>
</feature>
<feature type="mutagenesis site" description="Abrogates recognition by some antibodies; when associated with D-163 and D-166. Slight decrease of rituximab binding; when associated with D-163 and D-166." evidence="5">
    <original>T</original>
    <variation>K</variation>
    <location>
        <position position="159"/>
    </location>
</feature>
<feature type="mutagenesis site" description="Decreased binding of some antibodies. No effect on rituximab binding." evidence="5">
    <original>N</original>
    <variation>D</variation>
    <location>
        <position position="163"/>
    </location>
</feature>
<feature type="mutagenesis site" description="Decreased binding of some antibodies. No effect on rituximab binding." evidence="5">
    <original>N</original>
    <variation>D</variation>
    <location>
        <position position="166"/>
    </location>
</feature>
<feature type="mutagenesis site" description="Abrogates recognition by therapeutic antibodies, including rituximab; when associated with S-172." evidence="5">
    <original>A</original>
    <variation>S</variation>
    <location>
        <position position="170"/>
    </location>
</feature>
<feature type="mutagenesis site" description="Marked reduction in rituximab binding. Abrogates recognition by antibodies, including rituximab; when associated with S-170." evidence="5">
    <original>P</original>
    <variation>S</variation>
    <location>
        <position position="172"/>
    </location>
</feature>
<feature type="sequence conflict" description="In Ref. 3; CAA30179/CAA30180." evidence="16" ref="3">
    <original>P</original>
    <variation>L</variation>
    <location>
        <position position="13"/>
    </location>
</feature>
<feature type="sequence conflict" description="In Ref. 4; AAA88911." evidence="16" ref="4">
    <original>M</original>
    <variation>I</variation>
    <location>
        <position position="71"/>
    </location>
</feature>
<feature type="helix" evidence="20">
    <location>
        <begin position="49"/>
        <end position="70"/>
    </location>
</feature>
<feature type="helix" evidence="20">
    <location>
        <begin position="80"/>
        <end position="83"/>
    </location>
</feature>
<feature type="helix" evidence="20">
    <location>
        <begin position="86"/>
        <end position="97"/>
    </location>
</feature>
<feature type="helix" evidence="20">
    <location>
        <begin position="98"/>
        <end position="101"/>
    </location>
</feature>
<feature type="strand" evidence="19">
    <location>
        <begin position="107"/>
        <end position="109"/>
    </location>
</feature>
<feature type="helix" evidence="20">
    <location>
        <begin position="114"/>
        <end position="142"/>
    </location>
</feature>
<feature type="helix" evidence="20">
    <location>
        <begin position="153"/>
        <end position="156"/>
    </location>
</feature>
<feature type="helix" evidence="18">
    <location>
        <begin position="172"/>
        <end position="174"/>
    </location>
</feature>
<feature type="helix" evidence="18">
    <location>
        <begin position="178"/>
        <end position="185"/>
    </location>
</feature>
<feature type="turn" evidence="19">
    <location>
        <begin position="206"/>
        <end position="209"/>
    </location>
</feature>
<name>CD20_HUMAN</name>
<dbReference type="EMBL" id="X12530">
    <property type="protein sequence ID" value="CAA31046.1"/>
    <property type="molecule type" value="mRNA"/>
</dbReference>
<dbReference type="EMBL" id="M27394">
    <property type="protein sequence ID" value="AAA35581.1"/>
    <property type="molecule type" value="Genomic_DNA"/>
</dbReference>
<dbReference type="EMBL" id="X07203">
    <property type="protein sequence ID" value="CAA30179.1"/>
    <property type="molecule type" value="mRNA"/>
</dbReference>
<dbReference type="EMBL" id="X07204">
    <property type="protein sequence ID" value="CAA30180.1"/>
    <property type="molecule type" value="mRNA"/>
</dbReference>
<dbReference type="EMBL" id="L23419">
    <property type="protein sequence ID" value="AAA88911.1"/>
    <property type="molecule type" value="Genomic_DNA"/>
</dbReference>
<dbReference type="EMBL" id="L23415">
    <property type="protein sequence ID" value="AAA88911.1"/>
    <property type="status" value="JOINED"/>
    <property type="molecule type" value="Genomic_DNA"/>
</dbReference>
<dbReference type="EMBL" id="L23416">
    <property type="protein sequence ID" value="AAA88911.1"/>
    <property type="status" value="JOINED"/>
    <property type="molecule type" value="Genomic_DNA"/>
</dbReference>
<dbReference type="EMBL" id="L23417">
    <property type="protein sequence ID" value="AAA88911.1"/>
    <property type="status" value="JOINED"/>
    <property type="molecule type" value="Genomic_DNA"/>
</dbReference>
<dbReference type="EMBL" id="M27395">
    <property type="status" value="NOT_ANNOTATED_CDS"/>
    <property type="molecule type" value="Genomic_DNA"/>
</dbReference>
<dbReference type="EMBL" id="AP001034">
    <property type="status" value="NOT_ANNOTATED_CDS"/>
    <property type="molecule type" value="Genomic_DNA"/>
</dbReference>
<dbReference type="EMBL" id="AK300025">
    <property type="protein sequence ID" value="BAG61836.1"/>
    <property type="molecule type" value="mRNA"/>
</dbReference>
<dbReference type="EMBL" id="AP003127">
    <property type="status" value="NOT_ANNOTATED_CDS"/>
    <property type="molecule type" value="Genomic_DNA"/>
</dbReference>
<dbReference type="EMBL" id="CH471076">
    <property type="protein sequence ID" value="EAW73889.1"/>
    <property type="molecule type" value="Genomic_DNA"/>
</dbReference>
<dbReference type="EMBL" id="BC002807">
    <property type="protein sequence ID" value="AAH02807.1"/>
    <property type="molecule type" value="mRNA"/>
</dbReference>
<dbReference type="CCDS" id="CCDS31570.1">
    <molecule id="P11836-1"/>
</dbReference>
<dbReference type="PIR" id="A30586">
    <property type="entry name" value="A30586"/>
</dbReference>
<dbReference type="RefSeq" id="NP_068769.2">
    <molecule id="P11836-1"/>
    <property type="nucleotide sequence ID" value="NM_021950.3"/>
</dbReference>
<dbReference type="RefSeq" id="NP_690605.1">
    <molecule id="P11836-1"/>
    <property type="nucleotide sequence ID" value="NM_152866.3"/>
</dbReference>
<dbReference type="RefSeq" id="NP_690606.1">
    <molecule id="P11836-1"/>
    <property type="nucleotide sequence ID" value="NM_152867.2"/>
</dbReference>
<dbReference type="PDB" id="2OSL">
    <property type="method" value="X-ray"/>
    <property type="resolution" value="2.60 A"/>
    <property type="chains" value="P/Q=163-187"/>
</dbReference>
<dbReference type="PDB" id="3BKY">
    <property type="method" value="X-ray"/>
    <property type="resolution" value="2.61 A"/>
    <property type="chains" value="P=163-187"/>
</dbReference>
<dbReference type="PDB" id="3PP4">
    <property type="method" value="X-ray"/>
    <property type="resolution" value="1.60 A"/>
    <property type="chains" value="P=163-187"/>
</dbReference>
<dbReference type="PDB" id="6VJA">
    <property type="method" value="EM"/>
    <property type="resolution" value="3.30 A"/>
    <property type="chains" value="C/D=41-297"/>
</dbReference>
<dbReference type="PDB" id="6Y90">
    <property type="method" value="EM"/>
    <property type="resolution" value="3.69 A"/>
    <property type="chains" value="A/B=45-216"/>
</dbReference>
<dbReference type="PDB" id="6Y92">
    <property type="method" value="EM"/>
    <property type="resolution" value="4.73 A"/>
    <property type="chains" value="A/B=41-218"/>
</dbReference>
<dbReference type="PDB" id="6Y97">
    <property type="method" value="EM"/>
    <property type="resolution" value="4.33 A"/>
    <property type="chains" value="A/B=45-213"/>
</dbReference>
<dbReference type="PDB" id="6Y9A">
    <property type="method" value="EM"/>
    <property type="resolution" value="4.20 A"/>
    <property type="chains" value="A/B=45-213"/>
</dbReference>
<dbReference type="PDB" id="8VGN">
    <property type="method" value="EM"/>
    <property type="resolution" value="2.50 A"/>
    <property type="chains" value="G/I=41-297"/>
</dbReference>
<dbReference type="PDB" id="8VGO">
    <property type="method" value="EM"/>
    <property type="resolution" value="2.60 A"/>
    <property type="chains" value="G/I=41-297"/>
</dbReference>
<dbReference type="PDBsum" id="2OSL"/>
<dbReference type="PDBsum" id="3BKY"/>
<dbReference type="PDBsum" id="3PP4"/>
<dbReference type="PDBsum" id="6VJA"/>
<dbReference type="PDBsum" id="6Y90"/>
<dbReference type="PDBsum" id="6Y92"/>
<dbReference type="PDBsum" id="6Y97"/>
<dbReference type="PDBsum" id="6Y9A"/>
<dbReference type="PDBsum" id="8VGN"/>
<dbReference type="PDBsum" id="8VGO"/>
<dbReference type="EMDB" id="EMD-10731"/>
<dbReference type="EMDB" id="EMD-10732"/>
<dbReference type="EMDB" id="EMD-10733"/>
<dbReference type="EMDB" id="EMD-10734"/>
<dbReference type="EMDB" id="EMD-21212"/>
<dbReference type="EMDB" id="EMD-43212"/>
<dbReference type="EMDB" id="EMD-43213"/>
<dbReference type="EMDB" id="EMD-43214"/>
<dbReference type="EMDB" id="EMD-43215"/>
<dbReference type="EMDB" id="EMD-43216"/>
<dbReference type="EMDB" id="EMD-43217"/>
<dbReference type="EMDB" id="EMD-43218"/>
<dbReference type="EMDB" id="EMD-43219"/>
<dbReference type="SMR" id="P11836"/>
<dbReference type="BioGRID" id="107369">
    <property type="interactions" value="54"/>
</dbReference>
<dbReference type="CORUM" id="P11836"/>
<dbReference type="FunCoup" id="P11836">
    <property type="interactions" value="175"/>
</dbReference>
<dbReference type="IntAct" id="P11836">
    <property type="interactions" value="41"/>
</dbReference>
<dbReference type="MINT" id="P11836"/>
<dbReference type="STRING" id="9606.ENSP00000433277"/>
<dbReference type="ChEMBL" id="CHEMBL2058"/>
<dbReference type="DrugBank" id="DB16672">
    <property type="generic name" value="Epcoritamab"/>
</dbReference>
<dbReference type="DrugBank" id="DB16371">
    <property type="generic name" value="Glofitamab"/>
</dbReference>
<dbReference type="DrugBank" id="DB00078">
    <property type="generic name" value="Ibritumomab tiuxetan"/>
</dbReference>
<dbReference type="DrugBank" id="DB15434">
    <property type="generic name" value="Mosunetuzumab"/>
</dbReference>
<dbReference type="DrugBank" id="DB08935">
    <property type="generic name" value="Obinutuzumab"/>
</dbReference>
<dbReference type="DrugBank" id="DB11988">
    <property type="generic name" value="Ocrelizumab"/>
</dbReference>
<dbReference type="DrugBank" id="DB16684">
    <property type="generic name" value="Odronextamab"/>
</dbReference>
<dbReference type="DrugBank" id="DB06650">
    <property type="generic name" value="Ofatumumab"/>
</dbReference>
<dbReference type="DrugBank" id="DB00073">
    <property type="generic name" value="Rituximab"/>
</dbReference>
<dbReference type="DrugBank" id="DB09336">
    <property type="generic name" value="Technetium Tc-99m nofetumomab merpentan"/>
</dbReference>
<dbReference type="DrugBank" id="DB00081">
    <property type="generic name" value="Tositumomab"/>
</dbReference>
<dbReference type="DrugBank" id="DB11850">
    <property type="generic name" value="Ublituximab"/>
</dbReference>
<dbReference type="DrugCentral" id="P11836"/>
<dbReference type="GuidetoPHARMACOLOGY" id="2628"/>
<dbReference type="TCDB" id="1.A.37.1.1">
    <property type="family name" value="the cd20 ca(2+) channel (cd20) family"/>
</dbReference>
<dbReference type="GlyGen" id="P11836">
    <property type="glycosylation" value="4 sites, 4 N-linked glycans (1 site)"/>
</dbReference>
<dbReference type="iPTMnet" id="P11836"/>
<dbReference type="PhosphoSitePlus" id="P11836"/>
<dbReference type="SwissPalm" id="P11836"/>
<dbReference type="BioMuta" id="MS4A1"/>
<dbReference type="DMDM" id="115968"/>
<dbReference type="MassIVE" id="P11836"/>
<dbReference type="PaxDb" id="9606-ENSP00000433277"/>
<dbReference type="PeptideAtlas" id="P11836"/>
<dbReference type="ProteomicsDB" id="5066"/>
<dbReference type="ProteomicsDB" id="52807">
    <molecule id="P11836-1"/>
</dbReference>
<dbReference type="ABCD" id="P11836">
    <property type="antibodies" value="78 sequenced antibodies"/>
</dbReference>
<dbReference type="Antibodypedia" id="3497">
    <property type="antibodies" value="4678 antibodies from 62 providers"/>
</dbReference>
<dbReference type="CPTC" id="P11836">
    <property type="antibodies" value="1 antibody"/>
</dbReference>
<dbReference type="DNASU" id="931"/>
<dbReference type="Ensembl" id="ENST00000345732.9">
    <molecule id="P11836-1"/>
    <property type="protein sequence ID" value="ENSP00000314620.7"/>
    <property type="gene ID" value="ENSG00000156738.18"/>
</dbReference>
<dbReference type="Ensembl" id="ENST00000389939.2">
    <molecule id="P11836-1"/>
    <property type="protein sequence ID" value="ENSP00000374589.2"/>
    <property type="gene ID" value="ENSG00000156738.18"/>
</dbReference>
<dbReference type="Ensembl" id="ENST00000528313.1">
    <molecule id="P11836-2"/>
    <property type="protein sequence ID" value="ENSP00000432270.1"/>
    <property type="gene ID" value="ENSG00000156738.18"/>
</dbReference>
<dbReference type="Ensembl" id="ENST00000534668.6">
    <molecule id="P11836-1"/>
    <property type="protein sequence ID" value="ENSP00000433277.1"/>
    <property type="gene ID" value="ENSG00000156738.18"/>
</dbReference>
<dbReference type="Ensembl" id="ENST00000674194.1">
    <molecule id="P11836-1"/>
    <property type="protein sequence ID" value="ENSP00000501369.1"/>
    <property type="gene ID" value="ENSG00000156738.18"/>
</dbReference>
<dbReference type="GeneID" id="931"/>
<dbReference type="KEGG" id="hsa:931"/>
<dbReference type="MANE-Select" id="ENST00000345732.9">
    <property type="protein sequence ID" value="ENSP00000314620.7"/>
    <property type="RefSeq nucleotide sequence ID" value="NM_152866.3"/>
    <property type="RefSeq protein sequence ID" value="NP_690605.1"/>
</dbReference>
<dbReference type="UCSC" id="uc001npq.3">
    <molecule id="P11836-1"/>
    <property type="organism name" value="human"/>
</dbReference>
<dbReference type="AGR" id="HGNC:7315"/>
<dbReference type="CTD" id="931"/>
<dbReference type="DisGeNET" id="931"/>
<dbReference type="GeneCards" id="MS4A1"/>
<dbReference type="HGNC" id="HGNC:7315">
    <property type="gene designation" value="MS4A1"/>
</dbReference>
<dbReference type="HPA" id="ENSG00000156738">
    <property type="expression patterns" value="Tissue enriched (lymphoid)"/>
</dbReference>
<dbReference type="MalaCards" id="MS4A1"/>
<dbReference type="MIM" id="112210">
    <property type="type" value="gene"/>
</dbReference>
<dbReference type="MIM" id="613495">
    <property type="type" value="phenotype"/>
</dbReference>
<dbReference type="neXtProt" id="NX_P11836"/>
<dbReference type="OpenTargets" id="ENSG00000156738"/>
<dbReference type="Orphanet" id="1572">
    <property type="disease" value="Common variable immunodeficiency"/>
</dbReference>
<dbReference type="PharmGKB" id="PA31111"/>
<dbReference type="VEuPathDB" id="HostDB:ENSG00000156738"/>
<dbReference type="eggNOG" id="ENOG502S6Z3">
    <property type="taxonomic scope" value="Eukaryota"/>
</dbReference>
<dbReference type="GeneTree" id="ENSGT00510000048781"/>
<dbReference type="HOGENOM" id="CLU_082137_0_0_1"/>
<dbReference type="InParanoid" id="P11836"/>
<dbReference type="OMA" id="HFFKMES"/>
<dbReference type="OrthoDB" id="9426701at2759"/>
<dbReference type="PAN-GO" id="P11836">
    <property type="GO annotations" value="3 GO annotations based on evolutionary models"/>
</dbReference>
<dbReference type="PhylomeDB" id="P11836"/>
<dbReference type="TreeFam" id="TF335157"/>
<dbReference type="PathwayCommons" id="P11836"/>
<dbReference type="SignaLink" id="P11836"/>
<dbReference type="SIGNOR" id="P11836"/>
<dbReference type="BioGRID-ORCS" id="931">
    <property type="hits" value="13 hits in 1153 CRISPR screens"/>
</dbReference>
<dbReference type="ChiTaRS" id="MS4A1">
    <property type="organism name" value="human"/>
</dbReference>
<dbReference type="EvolutionaryTrace" id="P11836"/>
<dbReference type="GeneWiki" id="CD20"/>
<dbReference type="GenomeRNAi" id="931"/>
<dbReference type="Pharos" id="P11836">
    <property type="development level" value="Tclin"/>
</dbReference>
<dbReference type="PRO" id="PR:P11836"/>
<dbReference type="Proteomes" id="UP000005640">
    <property type="component" value="Chromosome 11"/>
</dbReference>
<dbReference type="RNAct" id="P11836">
    <property type="molecule type" value="protein"/>
</dbReference>
<dbReference type="Bgee" id="ENSG00000156738">
    <property type="expression patterns" value="Expressed in epithelium of nasopharynx and 141 other cell types or tissues"/>
</dbReference>
<dbReference type="ExpressionAtlas" id="P11836">
    <property type="expression patterns" value="baseline and differential"/>
</dbReference>
<dbReference type="GO" id="GO:0009986">
    <property type="term" value="C:cell surface"/>
    <property type="evidence" value="ECO:0000314"/>
    <property type="project" value="UniProtKB"/>
</dbReference>
<dbReference type="GO" id="GO:0009897">
    <property type="term" value="C:external side of plasma membrane"/>
    <property type="evidence" value="ECO:0000318"/>
    <property type="project" value="GO_Central"/>
</dbReference>
<dbReference type="GO" id="GO:0070062">
    <property type="term" value="C:extracellular exosome"/>
    <property type="evidence" value="ECO:0007005"/>
    <property type="project" value="UniProtKB"/>
</dbReference>
<dbReference type="GO" id="GO:0005615">
    <property type="term" value="C:extracellular space"/>
    <property type="evidence" value="ECO:0007005"/>
    <property type="project" value="UniProtKB"/>
</dbReference>
<dbReference type="GO" id="GO:0005654">
    <property type="term" value="C:nucleoplasm"/>
    <property type="evidence" value="ECO:0000314"/>
    <property type="project" value="HPA"/>
</dbReference>
<dbReference type="GO" id="GO:0005886">
    <property type="term" value="C:plasma membrane"/>
    <property type="evidence" value="ECO:0000314"/>
    <property type="project" value="ARUK-UCL"/>
</dbReference>
<dbReference type="GO" id="GO:0044853">
    <property type="term" value="C:plasma membrane raft"/>
    <property type="evidence" value="ECO:0000314"/>
    <property type="project" value="UniProtKB"/>
</dbReference>
<dbReference type="GO" id="GO:0005154">
    <property type="term" value="F:epidermal growth factor receptor binding"/>
    <property type="evidence" value="ECO:0007669"/>
    <property type="project" value="Ensembl"/>
</dbReference>
<dbReference type="GO" id="GO:0042802">
    <property type="term" value="F:identical protein binding"/>
    <property type="evidence" value="ECO:0000353"/>
    <property type="project" value="IntAct"/>
</dbReference>
<dbReference type="GO" id="GO:0019865">
    <property type="term" value="F:immunoglobulin binding"/>
    <property type="evidence" value="ECO:0000314"/>
    <property type="project" value="UniProtKB"/>
</dbReference>
<dbReference type="GO" id="GO:0023026">
    <property type="term" value="F:MHC class II protein complex binding"/>
    <property type="evidence" value="ECO:0007005"/>
    <property type="project" value="UniProtKB"/>
</dbReference>
<dbReference type="GO" id="GO:0042113">
    <property type="term" value="P:B cell activation"/>
    <property type="evidence" value="ECO:0000314"/>
    <property type="project" value="UniProtKB"/>
</dbReference>
<dbReference type="GO" id="GO:0030183">
    <property type="term" value="P:B cell differentiation"/>
    <property type="evidence" value="ECO:0000314"/>
    <property type="project" value="UniProtKB"/>
</dbReference>
<dbReference type="GO" id="GO:0042100">
    <property type="term" value="P:B cell proliferation"/>
    <property type="evidence" value="ECO:0000303"/>
    <property type="project" value="UniProtKB"/>
</dbReference>
<dbReference type="GO" id="GO:0050853">
    <property type="term" value="P:B cell receptor signaling pathway"/>
    <property type="evidence" value="ECO:0000314"/>
    <property type="project" value="UniProtKB"/>
</dbReference>
<dbReference type="GO" id="GO:1902656">
    <property type="term" value="P:calcium ion import into cytosol"/>
    <property type="evidence" value="ECO:0000314"/>
    <property type="project" value="UniProtKB"/>
</dbReference>
<dbReference type="GO" id="GO:0007166">
    <property type="term" value="P:cell surface receptor signaling pathway"/>
    <property type="evidence" value="ECO:0000318"/>
    <property type="project" value="GO_Central"/>
</dbReference>
<dbReference type="GO" id="GO:0006959">
    <property type="term" value="P:humoral immune response"/>
    <property type="evidence" value="ECO:0000303"/>
    <property type="project" value="UniProtKB"/>
</dbReference>
<dbReference type="GO" id="GO:1905665">
    <property type="term" value="P:positive regulation of calcium ion import across plasma membrane"/>
    <property type="evidence" value="ECO:0007669"/>
    <property type="project" value="Ensembl"/>
</dbReference>
<dbReference type="GO" id="GO:0051262">
    <property type="term" value="P:protein tetramerization"/>
    <property type="evidence" value="ECO:0000314"/>
    <property type="project" value="UniProtKB"/>
</dbReference>
<dbReference type="GO" id="GO:0009617">
    <property type="term" value="P:response to bacterium"/>
    <property type="evidence" value="ECO:0007669"/>
    <property type="project" value="Ensembl"/>
</dbReference>
<dbReference type="GO" id="GO:0002115">
    <property type="term" value="P:store-operated calcium entry"/>
    <property type="evidence" value="ECO:0000315"/>
    <property type="project" value="UniProtKB"/>
</dbReference>
<dbReference type="InterPro" id="IPR007237">
    <property type="entry name" value="CD20-like"/>
</dbReference>
<dbReference type="InterPro" id="IPR030417">
    <property type="entry name" value="MS4A"/>
</dbReference>
<dbReference type="PANTHER" id="PTHR23320:SF79">
    <property type="entry name" value="B-LYMPHOCYTE ANTIGEN CD20"/>
    <property type="match status" value="1"/>
</dbReference>
<dbReference type="PANTHER" id="PTHR23320">
    <property type="entry name" value="MEMBRANE-SPANNING 4-DOMAINS SUBFAMILY A MS4A -RELATED"/>
    <property type="match status" value="1"/>
</dbReference>
<dbReference type="Pfam" id="PF04103">
    <property type="entry name" value="CD20"/>
    <property type="match status" value="1"/>
</dbReference>
<sequence length="297" mass="33077">MTTPRNSVNGTFPAEPMKGPIAMQSGPKPLFRRMSSLVGPTQSFFMRESKTLGAVQIMNGLFHIALGGLLMIPAGIYAPICVTVWYPLWGGIMYIISGSLLAATEKNSRKCLVKGKMIMNSLSLFAAISGMILSIMDILNIKISHFLKMESLNFIRAHTPYINIYNCEPANPSEKNSPSTQYCYSIQSLFLGILSVMLIFAFFQELVIAGIVENEWKRTCSRPKSNIVLLSAEEKKEQTIEIKEEVVGLTETSSQPKNEEDIEIIPIQEEEEEETETNFPEPPQDQESSPIENDSSP</sequence>
<proteinExistence type="evidence at protein level"/>
<comment type="function">
    <text evidence="4 8 13 14">B-lymphocyte-specific membrane protein that plays a role in the regulation of cellular calcium influx necessary for the development, differentiation, and activation of B-lymphocytes (PubMed:12920111, PubMed:3925015, PubMed:7684739). Functions as a store-operated calcium (SOC) channel component promoting calcium influx after activation by the B-cell receptor/BCR (PubMed:12920111, PubMed:18474602, PubMed:7684739).</text>
</comment>
<comment type="subunit">
    <text evidence="8 14">Forms homotetramers (PubMed:18474602, PubMed:7684739). Interacts with the heavy and light chains of cell surface IgM, the antigen-binding components of the BCR (PubMed:18474602).</text>
</comment>
<comment type="interaction">
    <interactant intactId="EBI-2808234">
        <id>P11836</id>
    </interactant>
    <interactant intactId="EBI-13379418">
        <id>O00590</id>
        <label>ACKR2</label>
    </interactant>
    <organismsDiffer>false</organismsDiffer>
    <experiments>3</experiments>
</comment>
<comment type="interaction">
    <interactant intactId="EBI-2808234">
        <id>P11836</id>
    </interactant>
    <interactant intactId="EBI-13059134">
        <id>Q13520</id>
        <label>AQP6</label>
    </interactant>
    <organismsDiffer>false</organismsDiffer>
    <experiments>3</experiments>
</comment>
<comment type="interaction">
    <interactant intactId="EBI-2808234">
        <id>P11836</id>
    </interactant>
    <interactant intactId="EBI-2622997">
        <id>Q9HA82</id>
        <label>CERS4</label>
    </interactant>
    <organismsDiffer>false</organismsDiffer>
    <experiments>3</experiments>
</comment>
<comment type="interaction">
    <interactant intactId="EBI-2808234">
        <id>P11836</id>
    </interactant>
    <interactant intactId="EBI-17710733">
        <id>Q86T13</id>
        <label>CLEC14A</label>
    </interactant>
    <organismsDiffer>false</organismsDiffer>
    <experiments>3</experiments>
</comment>
<comment type="interaction">
    <interactant intactId="EBI-2808234">
        <id>P11836</id>
    </interactant>
    <interactant intactId="EBI-6942903">
        <id>Q96BA8</id>
        <label>CREB3L1</label>
    </interactant>
    <organismsDiffer>false</organismsDiffer>
    <experiments>3</experiments>
</comment>
<comment type="interaction">
    <interactant intactId="EBI-2808234">
        <id>P11836</id>
    </interactant>
    <interactant intactId="EBI-18304435">
        <id>Q5JX71</id>
        <label>FAM209A</label>
    </interactant>
    <organismsDiffer>false</organismsDiffer>
    <experiments>3</experiments>
</comment>
<comment type="interaction">
    <interactant intactId="EBI-2808234">
        <id>P11836</id>
    </interactant>
    <interactant intactId="EBI-17443171">
        <id>Q96P31-6</id>
        <label>FCRL3</label>
    </interactant>
    <organismsDiffer>false</organismsDiffer>
    <experiments>3</experiments>
</comment>
<comment type="interaction">
    <interactant intactId="EBI-2808234">
        <id>P11836</id>
    </interactant>
    <interactant intactId="EBI-3917143">
        <id>Q5T7V8</id>
        <label>GORAB</label>
    </interactant>
    <organismsDiffer>false</organismsDiffer>
    <experiments>3</experiments>
</comment>
<comment type="interaction">
    <interactant intactId="EBI-2808234">
        <id>P11836</id>
    </interactant>
    <interactant intactId="EBI-18076404">
        <id>O15529</id>
        <label>GPR42</label>
    </interactant>
    <organismsDiffer>false</organismsDiffer>
    <experiments>3</experiments>
</comment>
<comment type="interaction">
    <interactant intactId="EBI-2808234">
        <id>P11836</id>
    </interactant>
    <interactant intactId="EBI-1052304">
        <id>Q8NBQ5</id>
        <label>HSD17B11</label>
    </interactant>
    <organismsDiffer>false</organismsDiffer>
    <experiments>3</experiments>
</comment>
<comment type="interaction">
    <interactant intactId="EBI-2808234">
        <id>P11836</id>
    </interactant>
    <interactant intactId="EBI-18053395">
        <id>Q7Z5P4</id>
        <label>HSD17B13</label>
    </interactant>
    <organismsDiffer>false</organismsDiffer>
    <experiments>3</experiments>
</comment>
<comment type="interaction">
    <interactant intactId="EBI-2808234">
        <id>P11836</id>
    </interactant>
    <interactant intactId="EBI-80490">
        <id>P16871</id>
        <label>IL7R</label>
    </interactant>
    <organismsDiffer>false</organismsDiffer>
    <experiments>3</experiments>
</comment>
<comment type="interaction">
    <interactant intactId="EBI-2808234">
        <id>P11836</id>
    </interactant>
    <interactant intactId="EBI-749265">
        <id>Q8N6L0</id>
        <label>KASH5</label>
    </interactant>
    <organismsDiffer>false</organismsDiffer>
    <experiments>3</experiments>
</comment>
<comment type="interaction">
    <interactant intactId="EBI-2808234">
        <id>P11836</id>
    </interactant>
    <interactant intactId="EBI-17490413">
        <id>A8MZ59</id>
        <label>LEUTX</label>
    </interactant>
    <organismsDiffer>false</organismsDiffer>
    <experiments>3</experiments>
</comment>
<comment type="interaction">
    <interactant intactId="EBI-2808234">
        <id>P11836</id>
    </interactant>
    <interactant intactId="EBI-373355">
        <id>Q5SR56</id>
        <label>MFSD14B</label>
    </interactant>
    <organismsDiffer>false</organismsDiffer>
    <experiments>3</experiments>
</comment>
<comment type="interaction">
    <interactant intactId="EBI-2808234">
        <id>P11836</id>
    </interactant>
    <interactant intactId="EBI-17873222">
        <id>Q15546</id>
        <label>MMD</label>
    </interactant>
    <organismsDiffer>false</organismsDiffer>
    <experiments>3</experiments>
</comment>
<comment type="interaction">
    <interactant intactId="EBI-2808234">
        <id>P11836</id>
    </interactant>
    <interactant intactId="EBI-2808234">
        <id>P11836</id>
        <label>MS4A1</label>
    </interactant>
    <organismsDiffer>false</organismsDiffer>
    <experiments>2</experiments>
</comment>
<comment type="interaction">
    <interactant intactId="EBI-2808234">
        <id>P11836</id>
    </interactant>
    <interactant intactId="EBI-3923617">
        <id>Q9H2K0</id>
        <label>MTIF3</label>
    </interactant>
    <organismsDiffer>false</organismsDiffer>
    <experiments>3</experiments>
</comment>
<comment type="interaction">
    <interactant intactId="EBI-2808234">
        <id>P11836</id>
    </interactant>
    <interactant intactId="EBI-11337973">
        <id>Q9BRK0</id>
        <label>REEP2</label>
    </interactant>
    <organismsDiffer>false</organismsDiffer>
    <experiments>3</experiments>
</comment>
<comment type="interaction">
    <interactant intactId="EBI-2808234">
        <id>P11836</id>
    </interactant>
    <interactant intactId="EBI-7545592">
        <id>Q9H6H4</id>
        <label>REEP4</label>
    </interactant>
    <organismsDiffer>false</organismsDiffer>
    <experiments>3</experiments>
</comment>
<comment type="interaction">
    <interactant intactId="EBI-2808234">
        <id>P11836</id>
    </interactant>
    <interactant intactId="EBI-2466594">
        <id>Q6ZMZ0</id>
        <label>RNF19B</label>
    </interactant>
    <organismsDiffer>false</organismsDiffer>
    <experiments>3</experiments>
</comment>
<comment type="interaction">
    <interactant intactId="EBI-2808234">
        <id>P11836</id>
    </interactant>
    <interactant intactId="EBI-348482">
        <id>Q99942</id>
        <label>RNF5</label>
    </interactant>
    <organismsDiffer>false</organismsDiffer>
    <experiments>3</experiments>
</comment>
<comment type="interaction">
    <interactant intactId="EBI-2808234">
        <id>P11836</id>
    </interactant>
    <interactant intactId="EBI-3923031">
        <id>Q14973</id>
        <label>SLC10A1</label>
    </interactant>
    <organismsDiffer>false</organismsDiffer>
    <experiments>3</experiments>
</comment>
<comment type="interaction">
    <interactant intactId="EBI-2808234">
        <id>P11836</id>
    </interactant>
    <interactant intactId="EBI-18159983">
        <id>Q3KNW5</id>
        <label>SLC10A6</label>
    </interactant>
    <organismsDiffer>false</organismsDiffer>
    <experiments>3</experiments>
</comment>
<comment type="interaction">
    <interactant intactId="EBI-2808234">
        <id>P11836</id>
    </interactant>
    <interactant intactId="EBI-17595455">
        <id>P54219-3</id>
        <label>SLC18A1</label>
    </interactant>
    <organismsDiffer>false</organismsDiffer>
    <experiments>3</experiments>
</comment>
<comment type="interaction">
    <interactant intactId="EBI-2808234">
        <id>P11836</id>
    </interactant>
    <interactant intactId="EBI-17295964">
        <id>Q9NQQ7-3</id>
        <label>SLC35C2</label>
    </interactant>
    <organismsDiffer>false</organismsDiffer>
    <experiments>3</experiments>
</comment>
<comment type="interaction">
    <interactant intactId="EBI-2808234">
        <id>P11836</id>
    </interactant>
    <interactant intactId="EBI-726691">
        <id>Q8WY91</id>
        <label>THAP4</label>
    </interactant>
    <organismsDiffer>false</organismsDiffer>
    <experiments>3</experiments>
</comment>
<comment type="interaction">
    <interactant intactId="EBI-2808234">
        <id>P11836</id>
    </interactant>
    <interactant intactId="EBI-12878352">
        <id>A0PK05</id>
        <label>TMEM72</label>
    </interactant>
    <organismsDiffer>false</organismsDiffer>
    <experiments>3</experiments>
</comment>
<comment type="interaction">
    <interactant intactId="EBI-2808234">
        <id>P11836</id>
    </interactant>
    <interactant intactId="EBI-11724433">
        <id>Q6ZT21</id>
        <label>TMPPE</label>
    </interactant>
    <organismsDiffer>false</organismsDiffer>
    <experiments>3</experiments>
</comment>
<comment type="interaction">
    <interactant intactId="EBI-2808234">
        <id>P11836</id>
    </interactant>
    <interactant intactId="EBI-6447886">
        <id>Q9Y320</id>
        <label>TMX2</label>
    </interactant>
    <organismsDiffer>false</organismsDiffer>
    <experiments>3</experiments>
</comment>
<comment type="interaction">
    <interactant intactId="EBI-2808234">
        <id>P11836</id>
    </interactant>
    <interactant intactId="EBI-12195249">
        <id>Q5TGU0</id>
        <label>TSPO2</label>
    </interactant>
    <organismsDiffer>false</organismsDiffer>
    <experiments>3</experiments>
</comment>
<comment type="subcellular location">
    <subcellularLocation>
        <location evidence="4 11">Cell membrane</location>
        <topology evidence="11">Multi-pass membrane protein</topology>
    </subcellularLocation>
    <subcellularLocation>
        <location evidence="11">Cell membrane</location>
        <topology evidence="11">Lipid-anchor</topology>
    </subcellularLocation>
    <text evidence="4">Constitutively associated with membrane rafts.</text>
</comment>
<comment type="alternative products">
    <event type="alternative splicing"/>
    <isoform>
        <id>P11836-1</id>
        <name>1</name>
        <sequence type="displayed"/>
    </isoform>
    <isoform>
        <id>P11836-2</id>
        <name>2</name>
        <sequence type="described" ref="VSP_057058"/>
    </isoform>
</comment>
<comment type="tissue specificity">
    <text>Expressed on B-cells.</text>
</comment>
<comment type="PTM">
    <text evidence="12">Phosphorylated on serines and threonines in resting B-cells. Protein kinase C/PKC can use CD20 as substrate.</text>
</comment>
<comment type="disease" evidence="9">
    <disease id="DI-02802">
        <name>Immunodeficiency, common variable, 5</name>
        <acronym>CVID5</acronym>
        <description>A primary immunodeficiency characterized by antibody deficiency, hypogammaglobulinemia, recurrent bacterial infections and an inability to mount an antibody response to antigen. The defect results from a failure of B-cell differentiation and impaired secretion of immunoglobulins; the numbers of circulating B-cells is usually in the normal range, but can be low.</description>
        <dbReference type="MIM" id="613495"/>
    </disease>
    <text>The disease is caused by variants affecting the gene represented in this entry.</text>
</comment>
<comment type="pharmaceutical">
    <text>Monoclonal antibodies (mAb) against CD20 are used to treat B-cell non-Hodgkin lymphoma (NHL). These antibodies include Rituximab (Mabthera), Britumomab (Zevalin) and Tositumomab (Bexxar). CD20 engaged by mAb can generate transmembrane signals capable of directly controlling cell growth and triggering cell death in certain tumors. Alternatively, mAb can mediate complement-dependent cytotoxicity.</text>
</comment>
<comment type="similarity">
    <text evidence="16">Belongs to the MS4A family.</text>
</comment>
<comment type="caution">
    <text evidence="16">Epitope 1, mapped in PubMed:16785532, is predicted to be buried in the membrane. Its accessibility to the extracellular space, and thus to antibody recognition, is not explained.</text>
</comment>
<comment type="online information" name="Wikipedia">
    <link uri="https://en.wikipedia.org/wiki/CD20"/>
    <text>CD20 entry</text>
</comment>
<accession>P11836</accession>
<accession>A6NMS4</accession>
<accession>B4DT24</accession>
<accession>P08984</accession>
<accession>Q13963</accession>